<name>HTPX_BURO0</name>
<dbReference type="EC" id="3.4.24.-" evidence="1"/>
<dbReference type="EMBL" id="CP000958">
    <property type="protein sequence ID" value="ACA92298.1"/>
    <property type="molecule type" value="Genomic_DNA"/>
</dbReference>
<dbReference type="RefSeq" id="WP_011546484.1">
    <property type="nucleotide sequence ID" value="NC_010508.1"/>
</dbReference>
<dbReference type="SMR" id="B1K0J3"/>
<dbReference type="GeneID" id="83049922"/>
<dbReference type="KEGG" id="bcm:Bcenmc03_3140"/>
<dbReference type="HOGENOM" id="CLU_042266_3_0_4"/>
<dbReference type="Proteomes" id="UP000002169">
    <property type="component" value="Chromosome 1"/>
</dbReference>
<dbReference type="GO" id="GO:0005886">
    <property type="term" value="C:plasma membrane"/>
    <property type="evidence" value="ECO:0007669"/>
    <property type="project" value="UniProtKB-SubCell"/>
</dbReference>
<dbReference type="GO" id="GO:0004222">
    <property type="term" value="F:metalloendopeptidase activity"/>
    <property type="evidence" value="ECO:0007669"/>
    <property type="project" value="UniProtKB-UniRule"/>
</dbReference>
<dbReference type="GO" id="GO:0008270">
    <property type="term" value="F:zinc ion binding"/>
    <property type="evidence" value="ECO:0007669"/>
    <property type="project" value="UniProtKB-UniRule"/>
</dbReference>
<dbReference type="GO" id="GO:0006508">
    <property type="term" value="P:proteolysis"/>
    <property type="evidence" value="ECO:0007669"/>
    <property type="project" value="UniProtKB-KW"/>
</dbReference>
<dbReference type="CDD" id="cd07336">
    <property type="entry name" value="M48B_HtpX_like"/>
    <property type="match status" value="1"/>
</dbReference>
<dbReference type="Gene3D" id="3.30.2010.10">
    <property type="entry name" value="Metalloproteases ('zincins'), catalytic domain"/>
    <property type="match status" value="1"/>
</dbReference>
<dbReference type="HAMAP" id="MF_00188">
    <property type="entry name" value="Pept_M48_protease_HtpX"/>
    <property type="match status" value="1"/>
</dbReference>
<dbReference type="InterPro" id="IPR050083">
    <property type="entry name" value="HtpX_protease"/>
</dbReference>
<dbReference type="InterPro" id="IPR022919">
    <property type="entry name" value="Pept_M48_protease_HtpX"/>
</dbReference>
<dbReference type="InterPro" id="IPR001915">
    <property type="entry name" value="Peptidase_M48"/>
</dbReference>
<dbReference type="NCBIfam" id="NF002363">
    <property type="entry name" value="PRK01345.1"/>
    <property type="match status" value="1"/>
</dbReference>
<dbReference type="NCBIfam" id="NF002826">
    <property type="entry name" value="PRK03001.1"/>
    <property type="match status" value="1"/>
</dbReference>
<dbReference type="PANTHER" id="PTHR43221">
    <property type="entry name" value="PROTEASE HTPX"/>
    <property type="match status" value="1"/>
</dbReference>
<dbReference type="PANTHER" id="PTHR43221:SF1">
    <property type="entry name" value="PROTEASE HTPX"/>
    <property type="match status" value="1"/>
</dbReference>
<dbReference type="Pfam" id="PF01435">
    <property type="entry name" value="Peptidase_M48"/>
    <property type="match status" value="1"/>
</dbReference>
<reference key="1">
    <citation type="submission" date="2008-02" db="EMBL/GenBank/DDBJ databases">
        <title>Complete sequence of chromosome 1 of Burkholderia cenocepacia MC0-3.</title>
        <authorList>
            <person name="Copeland A."/>
            <person name="Lucas S."/>
            <person name="Lapidus A."/>
            <person name="Barry K."/>
            <person name="Bruce D."/>
            <person name="Goodwin L."/>
            <person name="Glavina del Rio T."/>
            <person name="Dalin E."/>
            <person name="Tice H."/>
            <person name="Pitluck S."/>
            <person name="Chain P."/>
            <person name="Malfatti S."/>
            <person name="Shin M."/>
            <person name="Vergez L."/>
            <person name="Schmutz J."/>
            <person name="Larimer F."/>
            <person name="Land M."/>
            <person name="Hauser L."/>
            <person name="Kyrpides N."/>
            <person name="Mikhailova N."/>
            <person name="Tiedje J."/>
            <person name="Richardson P."/>
        </authorList>
    </citation>
    <scope>NUCLEOTIDE SEQUENCE [LARGE SCALE GENOMIC DNA]</scope>
    <source>
        <strain>MC0-3</strain>
    </source>
</reference>
<organism>
    <name type="scientific">Burkholderia orbicola (strain MC0-3)</name>
    <dbReference type="NCBI Taxonomy" id="406425"/>
    <lineage>
        <taxon>Bacteria</taxon>
        <taxon>Pseudomonadati</taxon>
        <taxon>Pseudomonadota</taxon>
        <taxon>Betaproteobacteria</taxon>
        <taxon>Burkholderiales</taxon>
        <taxon>Burkholderiaceae</taxon>
        <taxon>Burkholderia</taxon>
        <taxon>Burkholderia cepacia complex</taxon>
        <taxon>Burkholderia orbicola</taxon>
    </lineage>
</organism>
<sequence length="285" mass="30967">MFNWVKTAMLMAAITALFIVIGGMIGGSRGMTIALLFALGMNFFSYWFSDKMVLRMYNAQEVDENTAPQFYRMVRELATRANLPMPRVYLINEDAPNAFATGRNPEHAAVAATTGILRVLSEREMRGVMAHELAHVKHRDILISTITATMAGAISALANFAMFFGGRDENGRPANPIAGIAVALLAPIAGALIQMAISRAREFEADRGGAQISGDPQSLATALDKIHRYAAGIPFQAAEAHPATAQMMIMNPLHGGGLQNLFSTHPATEERIARLMEMARTGRFE</sequence>
<comment type="cofactor">
    <cofactor evidence="1">
        <name>Zn(2+)</name>
        <dbReference type="ChEBI" id="CHEBI:29105"/>
    </cofactor>
    <text evidence="1">Binds 1 zinc ion per subunit.</text>
</comment>
<comment type="subcellular location">
    <subcellularLocation>
        <location evidence="1">Cell inner membrane</location>
        <topology evidence="1">Multi-pass membrane protein</topology>
    </subcellularLocation>
</comment>
<comment type="similarity">
    <text evidence="1">Belongs to the peptidase M48B family.</text>
</comment>
<protein>
    <recommendedName>
        <fullName evidence="1">Protease HtpX homolog</fullName>
        <ecNumber evidence="1">3.4.24.-</ecNumber>
    </recommendedName>
</protein>
<proteinExistence type="inferred from homology"/>
<gene>
    <name evidence="1" type="primary">htpX</name>
    <name type="ordered locus">Bcenmc03_3140</name>
</gene>
<accession>B1K0J3</accession>
<keyword id="KW-0997">Cell inner membrane</keyword>
<keyword id="KW-1003">Cell membrane</keyword>
<keyword id="KW-0378">Hydrolase</keyword>
<keyword id="KW-0472">Membrane</keyword>
<keyword id="KW-0479">Metal-binding</keyword>
<keyword id="KW-0482">Metalloprotease</keyword>
<keyword id="KW-0645">Protease</keyword>
<keyword id="KW-0812">Transmembrane</keyword>
<keyword id="KW-1133">Transmembrane helix</keyword>
<keyword id="KW-0862">Zinc</keyword>
<feature type="chain" id="PRO_1000098808" description="Protease HtpX homolog">
    <location>
        <begin position="1"/>
        <end position="285"/>
    </location>
</feature>
<feature type="transmembrane region" description="Helical" evidence="1">
    <location>
        <begin position="7"/>
        <end position="27"/>
    </location>
</feature>
<feature type="transmembrane region" description="Helical" evidence="1">
    <location>
        <begin position="30"/>
        <end position="50"/>
    </location>
</feature>
<feature type="transmembrane region" description="Helical" evidence="1">
    <location>
        <begin position="146"/>
        <end position="166"/>
    </location>
</feature>
<feature type="transmembrane region" description="Helical" evidence="1">
    <location>
        <begin position="177"/>
        <end position="197"/>
    </location>
</feature>
<feature type="active site" evidence="1">
    <location>
        <position position="132"/>
    </location>
</feature>
<feature type="binding site" evidence="1">
    <location>
        <position position="131"/>
    </location>
    <ligand>
        <name>Zn(2+)</name>
        <dbReference type="ChEBI" id="CHEBI:29105"/>
        <note>catalytic</note>
    </ligand>
</feature>
<feature type="binding site" evidence="1">
    <location>
        <position position="135"/>
    </location>
    <ligand>
        <name>Zn(2+)</name>
        <dbReference type="ChEBI" id="CHEBI:29105"/>
        <note>catalytic</note>
    </ligand>
</feature>
<feature type="binding site" evidence="1">
    <location>
        <position position="202"/>
    </location>
    <ligand>
        <name>Zn(2+)</name>
        <dbReference type="ChEBI" id="CHEBI:29105"/>
        <note>catalytic</note>
    </ligand>
</feature>
<evidence type="ECO:0000255" key="1">
    <source>
        <dbReference type="HAMAP-Rule" id="MF_00188"/>
    </source>
</evidence>